<sequence length="765" mass="81456">MPPTNGEGGSQQPQQQQQQQQQQQQQQQQQQQQQQGGSGSSDFVRKLYKMLEDPSYHSVVRWSDDGDSFVVLENEKFTKTILPKHFKHSNFASFVRQLNKYDFHKVRHNDENGESPYGRDAWEFKHPEFRADRKDNLDNIRRKAPAPRKQQQSEEAFNASQQQIAALSESLQATQQQLQALQQQCYELEKTNRLLVSEVMTLQKMVKAQNQASNEIINHLGSMEDRRRNNRGATQAAPNFHAGAMSFLTDGAEEPAPELRRARELLSVVGPDLQANRELERLYMTYNQNGAPAEPAATNSSAVMFTQAAAPGTQATAPGMPLVHNPLNDPQNMMYPVAQTPSIDPSFHTDQMHNMPYSRPLSNPAVVAETSSSQITPSQITPPPKDQMSSMWRDKKPRVLLVEDDKTCARIGAKFLSTLDCGVDTAGDGLEAVERINQDSTRFDLIFMDIIMPNMDGVSATAMIRMVSPHVPIIAMTSNIRGEDINTYFQYGMNDVLAKPFTRDNMSRLLRRHLAHLLKDPQSAASTGIVLTTDDLTLAGQTAGPATTGVGVGVAGAPSGGAHGPGPPAQHQQGYAMAPPTTMQPAPPQVKFEQSPTAAPAPGLDPSSAAAAPTWQSTNPAGVQLQPPPPPTPTQPSPTSAAPPAGLDPASAVAAAAAAAAAAAAAAASMTPGGYLAAAPPPPPPPGAMVLTPAGTPTGVGHPAPSGAGSAAGARGPPGPGPVGPGSVVDDSRPEKRQRLMQGGYASVSGHGHGHPGVGVAGFVQ</sequence>
<comment type="function">
    <text evidence="1">Transcription factor that is part of a SLN1-YPD1-SKN7 two-component regulatory system, which controls gene expression in response to changes in the osmolarity of the extracellular environment. Under low osmotic conditions, phosphorylated and activated by the phosphorelay intermediate protein YPD1. Also activated in response to oxidative stress, independent on the two-component regulatory system. Regulates heat shock genes in response to oxidative stress and genes involved in cell wall integrity in response to osmotic changes.</text>
</comment>
<comment type="subunit">
    <text evidence="5">Homotrimer.</text>
</comment>
<comment type="interaction">
    <interactant intactId="EBI-16190261">
        <id>G0SB31</id>
    </interactant>
    <interactant intactId="EBI-16190261">
        <id>G0SB31</id>
        <label>SKN7</label>
    </interactant>
    <organismsDiffer>false</organismsDiffer>
    <experiments>4</experiments>
</comment>
<comment type="subcellular location">
    <subcellularLocation>
        <location evidence="1">Nucleus</location>
    </subcellularLocation>
</comment>
<comment type="domain">
    <text evidence="5">Homotrimerization occurs through formation of a three-stranded coiled-coil structure generated by intermolecular interactions between HR-A/B regions allowing DNA-binding activity.</text>
</comment>
<comment type="similarity">
    <text evidence="7">Belongs to the SKN7 family.</text>
</comment>
<protein>
    <recommendedName>
        <fullName>Transcription factor SKN7</fullName>
    </recommendedName>
</protein>
<feature type="chain" id="PRO_0000442464" description="Transcription factor SKN7">
    <location>
        <begin position="1"/>
        <end position="765"/>
    </location>
</feature>
<feature type="domain" description="Response regulatory" evidence="3">
    <location>
        <begin position="398"/>
        <end position="514"/>
    </location>
</feature>
<feature type="region of interest" description="Disordered" evidence="4">
    <location>
        <begin position="1"/>
        <end position="42"/>
    </location>
</feature>
<feature type="region of interest" description="DNA-binding domain" evidence="8">
    <location>
        <begin position="40"/>
        <end position="145"/>
    </location>
</feature>
<feature type="region of interest" description="Hydrophobic repeat HR-A/B" evidence="8">
    <location>
        <begin position="160"/>
        <end position="220"/>
    </location>
</feature>
<feature type="region of interest" description="Disordered" evidence="4">
    <location>
        <begin position="371"/>
        <end position="391"/>
    </location>
</feature>
<feature type="region of interest" description="Transactivation domain" evidence="8">
    <location>
        <begin position="542"/>
        <end position="765"/>
    </location>
</feature>
<feature type="region of interest" description="Disordered" evidence="4">
    <location>
        <begin position="550"/>
        <end position="647"/>
    </location>
</feature>
<feature type="region of interest" description="Disordered" evidence="4">
    <location>
        <begin position="686"/>
        <end position="765"/>
    </location>
</feature>
<feature type="coiled-coil region" evidence="2">
    <location>
        <begin position="157"/>
        <end position="198"/>
    </location>
</feature>
<feature type="compositionally biased region" description="Low complexity" evidence="4">
    <location>
        <begin position="11"/>
        <end position="35"/>
    </location>
</feature>
<feature type="compositionally biased region" description="Gly residues" evidence="4">
    <location>
        <begin position="550"/>
        <end position="564"/>
    </location>
</feature>
<feature type="compositionally biased region" description="Low complexity" evidence="4">
    <location>
        <begin position="569"/>
        <end position="584"/>
    </location>
</feature>
<feature type="compositionally biased region" description="Pro residues" evidence="4">
    <location>
        <begin position="626"/>
        <end position="636"/>
    </location>
</feature>
<feature type="compositionally biased region" description="Low complexity" evidence="4">
    <location>
        <begin position="637"/>
        <end position="647"/>
    </location>
</feature>
<feature type="compositionally biased region" description="Low complexity" evidence="4">
    <location>
        <begin position="699"/>
        <end position="715"/>
    </location>
</feature>
<feature type="compositionally biased region" description="Gly residues" evidence="4">
    <location>
        <begin position="755"/>
        <end position="765"/>
    </location>
</feature>
<feature type="modified residue" description="4-aspartylphosphate" evidence="3">
    <location>
        <position position="449"/>
    </location>
</feature>
<feature type="mutagenesis site" description="Abolishes the binding to SSRE (SLN1 star response element) motifs in DNA, but preserves binding to HSE (heat-shock element) motifs." evidence="5">
    <original>K</original>
    <variation>M</variation>
    <location>
        <position position="100"/>
    </location>
</feature>
<feature type="helix" evidence="12">
    <location>
        <begin position="42"/>
        <end position="51"/>
    </location>
</feature>
<feature type="helix" evidence="12">
    <location>
        <begin position="54"/>
        <end position="56"/>
    </location>
</feature>
<feature type="turn" evidence="12">
    <location>
        <begin position="57"/>
        <end position="59"/>
    </location>
</feature>
<feature type="strand" evidence="12">
    <location>
        <begin position="60"/>
        <end position="62"/>
    </location>
</feature>
<feature type="strand" evidence="12">
    <location>
        <begin position="66"/>
        <end position="72"/>
    </location>
</feature>
<feature type="helix" evidence="12">
    <location>
        <begin position="74"/>
        <end position="80"/>
    </location>
</feature>
<feature type="helix" evidence="12">
    <location>
        <begin position="82"/>
        <end position="85"/>
    </location>
</feature>
<feature type="helix" evidence="12">
    <location>
        <begin position="91"/>
        <end position="100"/>
    </location>
</feature>
<feature type="strand" evidence="12">
    <location>
        <begin position="118"/>
        <end position="125"/>
    </location>
</feature>
<feature type="helix" evidence="12">
    <location>
        <begin position="135"/>
        <end position="137"/>
    </location>
</feature>
<feature type="helix" evidence="13">
    <location>
        <begin position="161"/>
        <end position="207"/>
    </location>
</feature>
<feature type="helix" evidence="14">
    <location>
        <begin position="215"/>
        <end position="219"/>
    </location>
</feature>
<keyword id="KW-0002">3D-structure</keyword>
<keyword id="KW-0175">Coiled coil</keyword>
<keyword id="KW-0238">DNA-binding</keyword>
<keyword id="KW-0539">Nucleus</keyword>
<keyword id="KW-0597">Phosphoprotein</keyword>
<keyword id="KW-1185">Reference proteome</keyword>
<keyword id="KW-0804">Transcription</keyword>
<keyword id="KW-0805">Transcription regulation</keyword>
<keyword id="KW-0902">Two-component regulatory system</keyword>
<accession>G0SB31</accession>
<proteinExistence type="evidence at protein level"/>
<evidence type="ECO:0000250" key="1">
    <source>
        <dbReference type="UniProtKB" id="P38889"/>
    </source>
</evidence>
<evidence type="ECO:0000255" key="2"/>
<evidence type="ECO:0000255" key="3">
    <source>
        <dbReference type="PROSITE-ProRule" id="PRU00169"/>
    </source>
</evidence>
<evidence type="ECO:0000256" key="4">
    <source>
        <dbReference type="SAM" id="MobiDB-lite"/>
    </source>
</evidence>
<evidence type="ECO:0000269" key="5">
    <source>
    </source>
</evidence>
<evidence type="ECO:0000303" key="6">
    <source>
    </source>
</evidence>
<evidence type="ECO:0000305" key="7"/>
<evidence type="ECO:0000305" key="8">
    <source>
    </source>
</evidence>
<evidence type="ECO:0007744" key="9">
    <source>
        <dbReference type="PDB" id="5D5W"/>
    </source>
</evidence>
<evidence type="ECO:0007744" key="10">
    <source>
        <dbReference type="PDB" id="5D5X"/>
    </source>
</evidence>
<evidence type="ECO:0007744" key="11">
    <source>
        <dbReference type="PDB" id="5D5Y"/>
    </source>
</evidence>
<evidence type="ECO:0007829" key="12">
    <source>
        <dbReference type="PDB" id="5D5W"/>
    </source>
</evidence>
<evidence type="ECO:0007829" key="13">
    <source>
        <dbReference type="PDB" id="5D5Y"/>
    </source>
</evidence>
<evidence type="ECO:0007829" key="14">
    <source>
        <dbReference type="PDB" id="5D60"/>
    </source>
</evidence>
<gene>
    <name evidence="6" type="primary">SKN7</name>
    <name type="ORF">CTHT_0048700</name>
</gene>
<organism>
    <name type="scientific">Chaetomium thermophilum (strain DSM 1495 / CBS 144.50 / IMI 039719)</name>
    <name type="common">Thermochaetoides thermophila</name>
    <dbReference type="NCBI Taxonomy" id="759272"/>
    <lineage>
        <taxon>Eukaryota</taxon>
        <taxon>Fungi</taxon>
        <taxon>Dikarya</taxon>
        <taxon>Ascomycota</taxon>
        <taxon>Pezizomycotina</taxon>
        <taxon>Sordariomycetes</taxon>
        <taxon>Sordariomycetidae</taxon>
        <taxon>Sordariales</taxon>
        <taxon>Chaetomiaceae</taxon>
        <taxon>Thermochaetoides</taxon>
    </lineage>
</organism>
<dbReference type="EMBL" id="GL988044">
    <property type="protein sequence ID" value="EGS19411.1"/>
    <property type="molecule type" value="Genomic_DNA"/>
</dbReference>
<dbReference type="RefSeq" id="XP_006695233.1">
    <property type="nucleotide sequence ID" value="XM_006695170.1"/>
</dbReference>
<dbReference type="PDB" id="5D5W">
    <property type="method" value="X-ray"/>
    <property type="resolution" value="2.35 A"/>
    <property type="chains" value="B=40-143"/>
</dbReference>
<dbReference type="PDB" id="5D5X">
    <property type="method" value="X-ray"/>
    <property type="resolution" value="2.40 A"/>
    <property type="chains" value="B/E=40-143"/>
</dbReference>
<dbReference type="PDB" id="5D5Y">
    <property type="method" value="X-ray"/>
    <property type="resolution" value="1.03 A"/>
    <property type="chains" value="A/B=160-209"/>
</dbReference>
<dbReference type="PDB" id="5D5Z">
    <property type="method" value="X-ray"/>
    <property type="resolution" value="1.70 A"/>
    <property type="chains" value="A/B/C/D/E=160-209"/>
</dbReference>
<dbReference type="PDB" id="5D60">
    <property type="method" value="X-ray"/>
    <property type="resolution" value="1.90 A"/>
    <property type="chains" value="A/B/C/D=160-220"/>
</dbReference>
<dbReference type="PDBsum" id="5D5W"/>
<dbReference type="PDBsum" id="5D5X"/>
<dbReference type="PDBsum" id="5D5Y"/>
<dbReference type="PDBsum" id="5D5Z"/>
<dbReference type="PDBsum" id="5D60"/>
<dbReference type="SMR" id="G0SB31"/>
<dbReference type="DIP" id="DIP-61979N"/>
<dbReference type="STRING" id="759272.G0SB31"/>
<dbReference type="GeneID" id="18258908"/>
<dbReference type="KEGG" id="cthr:CTHT_0048700"/>
<dbReference type="eggNOG" id="KOG0519">
    <property type="taxonomic scope" value="Eukaryota"/>
</dbReference>
<dbReference type="eggNOG" id="KOG0627">
    <property type="taxonomic scope" value="Eukaryota"/>
</dbReference>
<dbReference type="HOGENOM" id="CLU_008776_2_0_1"/>
<dbReference type="OMA" id="HIVIWAG"/>
<dbReference type="OrthoDB" id="424572at2759"/>
<dbReference type="EvolutionaryTrace" id="G0SB31"/>
<dbReference type="Proteomes" id="UP000008066">
    <property type="component" value="Unassembled WGS sequence"/>
</dbReference>
<dbReference type="GO" id="GO:0005634">
    <property type="term" value="C:nucleus"/>
    <property type="evidence" value="ECO:0007669"/>
    <property type="project" value="UniProtKB-SubCell"/>
</dbReference>
<dbReference type="GO" id="GO:0003700">
    <property type="term" value="F:DNA-binding transcription factor activity"/>
    <property type="evidence" value="ECO:0007669"/>
    <property type="project" value="InterPro"/>
</dbReference>
<dbReference type="GO" id="GO:0042802">
    <property type="term" value="F:identical protein binding"/>
    <property type="evidence" value="ECO:0000353"/>
    <property type="project" value="IntAct"/>
</dbReference>
<dbReference type="GO" id="GO:0043565">
    <property type="term" value="F:sequence-specific DNA binding"/>
    <property type="evidence" value="ECO:0007669"/>
    <property type="project" value="InterPro"/>
</dbReference>
<dbReference type="GO" id="GO:0000160">
    <property type="term" value="P:phosphorelay signal transduction system"/>
    <property type="evidence" value="ECO:0007669"/>
    <property type="project" value="UniProtKB-KW"/>
</dbReference>
<dbReference type="CDD" id="cd17546">
    <property type="entry name" value="REC_hyHK_CKI1_RcsC-like"/>
    <property type="match status" value="1"/>
</dbReference>
<dbReference type="FunFam" id="3.40.50.2300:FF:000212">
    <property type="entry name" value="Stress response regulator/HFS transcription factor"/>
    <property type="match status" value="1"/>
</dbReference>
<dbReference type="FunFam" id="1.10.10.10:FF:000380">
    <property type="entry name" value="Transcription factor SKN7"/>
    <property type="match status" value="1"/>
</dbReference>
<dbReference type="Gene3D" id="3.40.50.2300">
    <property type="match status" value="1"/>
</dbReference>
<dbReference type="Gene3D" id="1.10.10.10">
    <property type="entry name" value="Winged helix-like DNA-binding domain superfamily/Winged helix DNA-binding domain"/>
    <property type="match status" value="1"/>
</dbReference>
<dbReference type="InterPro" id="IPR011006">
    <property type="entry name" value="CheY-like_superfamily"/>
</dbReference>
<dbReference type="InterPro" id="IPR000232">
    <property type="entry name" value="HSF_DNA-bd"/>
</dbReference>
<dbReference type="InterPro" id="IPR001789">
    <property type="entry name" value="Sig_transdc_resp-reg_receiver"/>
</dbReference>
<dbReference type="InterPro" id="IPR036388">
    <property type="entry name" value="WH-like_DNA-bd_sf"/>
</dbReference>
<dbReference type="InterPro" id="IPR036390">
    <property type="entry name" value="WH_DNA-bd_sf"/>
</dbReference>
<dbReference type="PANTHER" id="PTHR45339">
    <property type="entry name" value="HYBRID SIGNAL TRANSDUCTION HISTIDINE KINASE J"/>
    <property type="match status" value="1"/>
</dbReference>
<dbReference type="PANTHER" id="PTHR45339:SF1">
    <property type="entry name" value="HYBRID SIGNAL TRANSDUCTION HISTIDINE KINASE J"/>
    <property type="match status" value="1"/>
</dbReference>
<dbReference type="Pfam" id="PF00447">
    <property type="entry name" value="HSF_DNA-bind"/>
    <property type="match status" value="1"/>
</dbReference>
<dbReference type="Pfam" id="PF00072">
    <property type="entry name" value="Response_reg"/>
    <property type="match status" value="1"/>
</dbReference>
<dbReference type="PRINTS" id="PR00056">
    <property type="entry name" value="HSFDOMAIN"/>
</dbReference>
<dbReference type="SMART" id="SM00415">
    <property type="entry name" value="HSF"/>
    <property type="match status" value="1"/>
</dbReference>
<dbReference type="SMART" id="SM00448">
    <property type="entry name" value="REC"/>
    <property type="match status" value="1"/>
</dbReference>
<dbReference type="SUPFAM" id="SSF52172">
    <property type="entry name" value="CheY-like"/>
    <property type="match status" value="1"/>
</dbReference>
<dbReference type="SUPFAM" id="SSF46785">
    <property type="entry name" value="Winged helix' DNA-binding domain"/>
    <property type="match status" value="1"/>
</dbReference>
<dbReference type="PROSITE" id="PS00434">
    <property type="entry name" value="HSF_DOMAIN"/>
    <property type="match status" value="1"/>
</dbReference>
<dbReference type="PROSITE" id="PS50110">
    <property type="entry name" value="RESPONSE_REGULATORY"/>
    <property type="match status" value="1"/>
</dbReference>
<reference key="1">
    <citation type="journal article" date="2011" name="Cell">
        <title>Insight into structure and assembly of the nuclear pore complex by utilizing the genome of a eukaryotic thermophile.</title>
        <authorList>
            <person name="Amlacher S."/>
            <person name="Sarges P."/>
            <person name="Flemming D."/>
            <person name="van Noort V."/>
            <person name="Kunze R."/>
            <person name="Devos D.P."/>
            <person name="Arumugam M."/>
            <person name="Bork P."/>
            <person name="Hurt E."/>
        </authorList>
    </citation>
    <scope>NUCLEOTIDE SEQUENCE [LARGE SCALE GENOMIC DNA]</scope>
    <source>
        <strain>DSM 1495 / CBS 144.50 / IMI 039719</strain>
    </source>
</reference>
<reference evidence="9 10 11" key="2">
    <citation type="journal article" date="2016" name="Nat. Struct. Mol. Biol.">
        <title>Structure of human heat-shock transcription factor 1 in complex with DNA.</title>
        <authorList>
            <person name="Neudegger T."/>
            <person name="Verghese J."/>
            <person name="Hayer-Hartl M."/>
            <person name="Hartl F.U."/>
            <person name="Bracher A."/>
        </authorList>
    </citation>
    <scope>X-RAY CRYSTALLOGRAPHY (1.03 ANGSTROMS) OF 40-143 AND 160-209 IN COMPLEX WITH DNA</scope>
    <scope>SUBUNIT</scope>
    <scope>MUTAGENESIS OF LYS-100</scope>
</reference>
<name>SKN7_CHATD</name>